<accession>O23550</accession>
<evidence type="ECO:0000256" key="1">
    <source>
        <dbReference type="SAM" id="MobiDB-lite"/>
    </source>
</evidence>
<evidence type="ECO:0000269" key="2">
    <source>
    </source>
</evidence>
<evidence type="ECO:0000269" key="3">
    <source>
    </source>
</evidence>
<evidence type="ECO:0000303" key="4">
    <source>
    </source>
</evidence>
<evidence type="ECO:0000305" key="5"/>
<evidence type="ECO:0000312" key="6">
    <source>
        <dbReference type="Araport" id="AT4G17060"/>
    </source>
</evidence>
<evidence type="ECO:0000312" key="7">
    <source>
        <dbReference type="EMBL" id="CAB10486.1"/>
    </source>
</evidence>
<evidence type="ECO:0007744" key="8">
    <source>
    </source>
</evidence>
<feature type="chain" id="PRO_0000443509" description="Protein FIP2">
    <location>
        <begin position="1"/>
        <end position="310"/>
    </location>
</feature>
<feature type="region of interest" description="Disordered" evidence="1">
    <location>
        <begin position="1"/>
        <end position="58"/>
    </location>
</feature>
<feature type="region of interest" description="Disordered" evidence="1">
    <location>
        <begin position="115"/>
        <end position="135"/>
    </location>
</feature>
<feature type="region of interest" description="Disordered" evidence="1">
    <location>
        <begin position="152"/>
        <end position="171"/>
    </location>
</feature>
<feature type="region of interest" description="Disordered" evidence="1">
    <location>
        <begin position="177"/>
        <end position="221"/>
    </location>
</feature>
<feature type="compositionally biased region" description="Acidic residues" evidence="1">
    <location>
        <begin position="14"/>
        <end position="25"/>
    </location>
</feature>
<feature type="compositionally biased region" description="Polar residues" evidence="1">
    <location>
        <begin position="208"/>
        <end position="221"/>
    </location>
</feature>
<feature type="modified residue" description="Phosphoserine" evidence="8">
    <location>
        <position position="77"/>
    </location>
</feature>
<feature type="modified residue" description="Phosphoserine" evidence="8">
    <location>
        <position position="105"/>
    </location>
</feature>
<reference key="1">
    <citation type="journal article" date="1998" name="Nature">
        <title>Analysis of 1.9 Mb of contiguous sequence from chromosome 4 of Arabidopsis thaliana.</title>
        <authorList>
            <person name="Bevan M."/>
            <person name="Bancroft I."/>
            <person name="Bent E."/>
            <person name="Love K."/>
            <person name="Goodman H.M."/>
            <person name="Dean C."/>
            <person name="Bergkamp R."/>
            <person name="Dirkse W."/>
            <person name="van Staveren M."/>
            <person name="Stiekema W."/>
            <person name="Drost L."/>
            <person name="Ridley P."/>
            <person name="Hudson S.-A."/>
            <person name="Patel K."/>
            <person name="Murphy G."/>
            <person name="Piffanelli P."/>
            <person name="Wedler H."/>
            <person name="Wedler E."/>
            <person name="Wambutt R."/>
            <person name="Weitzenegger T."/>
            <person name="Pohl T."/>
            <person name="Terryn N."/>
            <person name="Gielen J."/>
            <person name="Villarroel R."/>
            <person name="De Clercq R."/>
            <person name="van Montagu M."/>
            <person name="Lecharny A."/>
            <person name="Aubourg S."/>
            <person name="Gy I."/>
            <person name="Kreis M."/>
            <person name="Lao N."/>
            <person name="Kavanagh T."/>
            <person name="Hempel S."/>
            <person name="Kotter P."/>
            <person name="Entian K.-D."/>
            <person name="Rieger M."/>
            <person name="Schaefer M."/>
            <person name="Funk B."/>
            <person name="Mueller-Auer S."/>
            <person name="Silvey M."/>
            <person name="James R."/>
            <person name="Monfort A."/>
            <person name="Pons A."/>
            <person name="Puigdomenech P."/>
            <person name="Douka A."/>
            <person name="Voukelatou E."/>
            <person name="Milioni D."/>
            <person name="Hatzopoulos P."/>
            <person name="Piravandi E."/>
            <person name="Obermaier B."/>
            <person name="Hilbert H."/>
            <person name="Duesterhoeft A."/>
            <person name="Moores T."/>
            <person name="Jones J.D.G."/>
            <person name="Eneva T."/>
            <person name="Palme K."/>
            <person name="Benes V."/>
            <person name="Rechmann S."/>
            <person name="Ansorge W."/>
            <person name="Cooke R."/>
            <person name="Berger C."/>
            <person name="Delseny M."/>
            <person name="Voet M."/>
            <person name="Volckaert G."/>
            <person name="Mewes H.-W."/>
            <person name="Klosterman S."/>
            <person name="Schueller C."/>
            <person name="Chalwatzis N."/>
        </authorList>
    </citation>
    <scope>NUCLEOTIDE SEQUENCE [LARGE SCALE GENOMIC DNA]</scope>
    <source>
        <strain>cv. Columbia</strain>
    </source>
</reference>
<reference key="2">
    <citation type="journal article" date="1999" name="Nature">
        <title>Sequence and analysis of chromosome 4 of the plant Arabidopsis thaliana.</title>
        <authorList>
            <person name="Mayer K.F.X."/>
            <person name="Schueller C."/>
            <person name="Wambutt R."/>
            <person name="Murphy G."/>
            <person name="Volckaert G."/>
            <person name="Pohl T."/>
            <person name="Duesterhoeft A."/>
            <person name="Stiekema W."/>
            <person name="Entian K.-D."/>
            <person name="Terryn N."/>
            <person name="Harris B."/>
            <person name="Ansorge W."/>
            <person name="Brandt P."/>
            <person name="Grivell L.A."/>
            <person name="Rieger M."/>
            <person name="Weichselgartner M."/>
            <person name="de Simone V."/>
            <person name="Obermaier B."/>
            <person name="Mache R."/>
            <person name="Mueller M."/>
            <person name="Kreis M."/>
            <person name="Delseny M."/>
            <person name="Puigdomenech P."/>
            <person name="Watson M."/>
            <person name="Schmidtheini T."/>
            <person name="Reichert B."/>
            <person name="Portetelle D."/>
            <person name="Perez-Alonso M."/>
            <person name="Boutry M."/>
            <person name="Bancroft I."/>
            <person name="Vos P."/>
            <person name="Hoheisel J."/>
            <person name="Zimmermann W."/>
            <person name="Wedler H."/>
            <person name="Ridley P."/>
            <person name="Langham S.-A."/>
            <person name="McCullagh B."/>
            <person name="Bilham L."/>
            <person name="Robben J."/>
            <person name="van der Schueren J."/>
            <person name="Grymonprez B."/>
            <person name="Chuang Y.-J."/>
            <person name="Vandenbussche F."/>
            <person name="Braeken M."/>
            <person name="Weltjens I."/>
            <person name="Voet M."/>
            <person name="Bastiaens I."/>
            <person name="Aert R."/>
            <person name="Defoor E."/>
            <person name="Weitzenegger T."/>
            <person name="Bothe G."/>
            <person name="Ramsperger U."/>
            <person name="Hilbert H."/>
            <person name="Braun M."/>
            <person name="Holzer E."/>
            <person name="Brandt A."/>
            <person name="Peters S."/>
            <person name="van Staveren M."/>
            <person name="Dirkse W."/>
            <person name="Mooijman P."/>
            <person name="Klein Lankhorst R."/>
            <person name="Rose M."/>
            <person name="Hauf J."/>
            <person name="Koetter P."/>
            <person name="Berneiser S."/>
            <person name="Hempel S."/>
            <person name="Feldpausch M."/>
            <person name="Lamberth S."/>
            <person name="Van den Daele H."/>
            <person name="De Keyser A."/>
            <person name="Buysshaert C."/>
            <person name="Gielen J."/>
            <person name="Villarroel R."/>
            <person name="De Clercq R."/>
            <person name="van Montagu M."/>
            <person name="Rogers J."/>
            <person name="Cronin A."/>
            <person name="Quail M.A."/>
            <person name="Bray-Allen S."/>
            <person name="Clark L."/>
            <person name="Doggett J."/>
            <person name="Hall S."/>
            <person name="Kay M."/>
            <person name="Lennard N."/>
            <person name="McLay K."/>
            <person name="Mayes R."/>
            <person name="Pettett A."/>
            <person name="Rajandream M.A."/>
            <person name="Lyne M."/>
            <person name="Benes V."/>
            <person name="Rechmann S."/>
            <person name="Borkova D."/>
            <person name="Bloecker H."/>
            <person name="Scharfe M."/>
            <person name="Grimm M."/>
            <person name="Loehnert T.-H."/>
            <person name="Dose S."/>
            <person name="de Haan M."/>
            <person name="Maarse A.C."/>
            <person name="Schaefer M."/>
            <person name="Mueller-Auer S."/>
            <person name="Gabel C."/>
            <person name="Fuchs M."/>
            <person name="Fartmann B."/>
            <person name="Granderath K."/>
            <person name="Dauner D."/>
            <person name="Herzl A."/>
            <person name="Neumann S."/>
            <person name="Argiriou A."/>
            <person name="Vitale D."/>
            <person name="Liguori R."/>
            <person name="Piravandi E."/>
            <person name="Massenet O."/>
            <person name="Quigley F."/>
            <person name="Clabauld G."/>
            <person name="Muendlein A."/>
            <person name="Felber R."/>
            <person name="Schnabl S."/>
            <person name="Hiller R."/>
            <person name="Schmidt W."/>
            <person name="Lecharny A."/>
            <person name="Aubourg S."/>
            <person name="Chefdor F."/>
            <person name="Cooke R."/>
            <person name="Berger C."/>
            <person name="Monfort A."/>
            <person name="Casacuberta E."/>
            <person name="Gibbons T."/>
            <person name="Weber N."/>
            <person name="Vandenbol M."/>
            <person name="Bargues M."/>
            <person name="Terol J."/>
            <person name="Torres A."/>
            <person name="Perez-Perez A."/>
            <person name="Purnelle B."/>
            <person name="Bent E."/>
            <person name="Johnson S."/>
            <person name="Tacon D."/>
            <person name="Jesse T."/>
            <person name="Heijnen L."/>
            <person name="Schwarz S."/>
            <person name="Scholler P."/>
            <person name="Heber S."/>
            <person name="Francs P."/>
            <person name="Bielke C."/>
            <person name="Frishman D."/>
            <person name="Haase D."/>
            <person name="Lemcke K."/>
            <person name="Mewes H.-W."/>
            <person name="Stocker S."/>
            <person name="Zaccaria P."/>
            <person name="Bevan M."/>
            <person name="Wilson R.K."/>
            <person name="de la Bastide M."/>
            <person name="Habermann K."/>
            <person name="Parnell L."/>
            <person name="Dedhia N."/>
            <person name="Gnoj L."/>
            <person name="Schutz K."/>
            <person name="Huang E."/>
            <person name="Spiegel L."/>
            <person name="Sekhon M."/>
            <person name="Murray J."/>
            <person name="Sheet P."/>
            <person name="Cordes M."/>
            <person name="Abu-Threideh J."/>
            <person name="Stoneking T."/>
            <person name="Kalicki J."/>
            <person name="Graves T."/>
            <person name="Harmon G."/>
            <person name="Edwards J."/>
            <person name="Latreille P."/>
            <person name="Courtney L."/>
            <person name="Cloud J."/>
            <person name="Abbott A."/>
            <person name="Scott K."/>
            <person name="Johnson D."/>
            <person name="Minx P."/>
            <person name="Bentley D."/>
            <person name="Fulton B."/>
            <person name="Miller N."/>
            <person name="Greco T."/>
            <person name="Kemp K."/>
            <person name="Kramer J."/>
            <person name="Fulton L."/>
            <person name="Mardis E."/>
            <person name="Dante M."/>
            <person name="Pepin K."/>
            <person name="Hillier L.W."/>
            <person name="Nelson J."/>
            <person name="Spieth J."/>
            <person name="Ryan E."/>
            <person name="Andrews S."/>
            <person name="Geisel C."/>
            <person name="Layman D."/>
            <person name="Du H."/>
            <person name="Ali J."/>
            <person name="Berghoff A."/>
            <person name="Jones K."/>
            <person name="Drone K."/>
            <person name="Cotton M."/>
            <person name="Joshu C."/>
            <person name="Antonoiu B."/>
            <person name="Zidanic M."/>
            <person name="Strong C."/>
            <person name="Sun H."/>
            <person name="Lamar B."/>
            <person name="Yordan C."/>
            <person name="Ma P."/>
            <person name="Zhong J."/>
            <person name="Preston R."/>
            <person name="Vil D."/>
            <person name="Shekher M."/>
            <person name="Matero A."/>
            <person name="Shah R."/>
            <person name="Swaby I.K."/>
            <person name="O'Shaughnessy A."/>
            <person name="Rodriguez M."/>
            <person name="Hoffman J."/>
            <person name="Till S."/>
            <person name="Granat S."/>
            <person name="Shohdy N."/>
            <person name="Hasegawa A."/>
            <person name="Hameed A."/>
            <person name="Lodhi M."/>
            <person name="Johnson A."/>
            <person name="Chen E."/>
            <person name="Marra M.A."/>
            <person name="Martienssen R."/>
            <person name="McCombie W.R."/>
        </authorList>
    </citation>
    <scope>NUCLEOTIDE SEQUENCE [LARGE SCALE GENOMIC DNA]</scope>
    <source>
        <strain>cv. Columbia</strain>
    </source>
</reference>
<reference key="3">
    <citation type="journal article" date="2017" name="Plant J.">
        <title>Araport11: a complete reannotation of the Arabidopsis thaliana reference genome.</title>
        <authorList>
            <person name="Cheng C.Y."/>
            <person name="Krishnakumar V."/>
            <person name="Chan A.P."/>
            <person name="Thibaud-Nissen F."/>
            <person name="Schobel S."/>
            <person name="Town C.D."/>
        </authorList>
    </citation>
    <scope>GENOME REANNOTATION</scope>
    <source>
        <strain>cv. Columbia</strain>
    </source>
</reference>
<reference key="4">
    <citation type="submission" date="2008-06" db="EMBL/GenBank/DDBJ databases">
        <title>Arabidopsis ORF clones.</title>
        <authorList>
            <person name="De Los Reyes C."/>
            <person name="Quan R."/>
            <person name="Chen H."/>
            <person name="Bautista V."/>
            <person name="Kim C.J."/>
            <person name="Ecker J.R."/>
        </authorList>
    </citation>
    <scope>NUCLEOTIDE SEQUENCE [LARGE SCALE MRNA]</scope>
    <source>
        <strain>cv. Columbia</strain>
    </source>
</reference>
<reference key="5">
    <citation type="journal article" date="2008" name="J. Proteome Res.">
        <title>Site-specific phosphorylation profiling of Arabidopsis proteins by mass spectrometry and peptide chip analysis.</title>
        <authorList>
            <person name="de la Fuente van Bentem S."/>
            <person name="Anrather D."/>
            <person name="Dohnal I."/>
            <person name="Roitinger E."/>
            <person name="Csaszar E."/>
            <person name="Joore J."/>
            <person name="Buijnink J."/>
            <person name="Carreri A."/>
            <person name="Forzani C."/>
            <person name="Lorkovic Z.J."/>
            <person name="Barta A."/>
            <person name="Lecourieux D."/>
            <person name="Verhounig A."/>
            <person name="Jonak C."/>
            <person name="Hirt H."/>
        </authorList>
    </citation>
    <scope>IDENTIFICATION BY MASS SPECTROMETRY [LARGE SCALE ANALYSIS]</scope>
    <source>
        <tissue>Root</tissue>
    </source>
</reference>
<reference key="6">
    <citation type="journal article" date="2009" name="Plant Physiol.">
        <title>FRIGIDA delays flowering in Arabidopsis via a cotranscriptional mechanism involving direct interaction with the nuclear cap-binding complex.</title>
        <authorList>
            <person name="Geraldo N."/>
            <person name="Baeurle I."/>
            <person name="Kidou S."/>
            <person name="Hu X."/>
            <person name="Dean C."/>
        </authorList>
    </citation>
    <scope>INTERACTION WITH FRI</scope>
    <scope>DISRUPTION PHENOTYPE</scope>
</reference>
<reference key="7">
    <citation type="journal article" date="2009" name="Plant Physiol.">
        <title>Large-scale Arabidopsis phosphoproteome profiling reveals novel chloroplast kinase substrates and phosphorylation networks.</title>
        <authorList>
            <person name="Reiland S."/>
            <person name="Messerli G."/>
            <person name="Baerenfaller K."/>
            <person name="Gerrits B."/>
            <person name="Endler A."/>
            <person name="Grossmann J."/>
            <person name="Gruissem W."/>
            <person name="Baginsky S."/>
        </authorList>
    </citation>
    <scope>PHOSPHORYLATION [LARGE SCALE ANALYSIS] AT SER-77 AND SER-105</scope>
    <scope>IDENTIFICATION BY MASS SPECTROMETRY [LARGE SCALE ANALYSIS]</scope>
</reference>
<reference key="8">
    <citation type="journal article" date="2012" name="Plant J.">
        <title>The wavy growth 3 E3 ligase family controls the gravitropic response in Arabidopsis roots.</title>
        <authorList>
            <person name="Sakai T."/>
            <person name="Mochizuki S."/>
            <person name="Haga K."/>
            <person name="Uehara Y."/>
            <person name="Suzuki A."/>
            <person name="Harada A."/>
            <person name="Wada T."/>
            <person name="Ishiguro S."/>
            <person name="Okada K."/>
        </authorList>
    </citation>
    <scope>INTERACTION WITH WAV3</scope>
    <source>
        <strain>cv. Landsberg erecta</strain>
    </source>
</reference>
<proteinExistence type="evidence at protein level"/>
<comment type="subunit">
    <text evidence="2 3">Interacts with FRI (PubMed:19429606). Interacts with WAV3 (PubMed:22122664).</text>
</comment>
<comment type="disruption phenotype">
    <text evidence="2">No visible phenotype under normal growth conditions.</text>
</comment>
<sequence length="310" mass="34434">MGFAPVTPAAVETYDPDVDHDDESNGLDGFRVRSKRSGKFSGGYSDSPREVGDGYGVRSRARSNMKMYGGFKSEFDSDHDSGSGFGLKRKYNGNPKVSADFDADSDDEIVLVPKATRLRTHGKPSSGDFSHGSGGGFPLKSFGDRNFASHGFKPKNFSKPEPNFSQDLDYDDEFDDDRAEREGFNPRIQSSRSSSRVNGYSRKDGSYPRNTGASNGYGSSSRFKHEQMNAAAEVESDPIDEVVSSVKMLTEMFVRVENSKMEMMREMEKSRMEMELKHCQMMLESQQQIIGAFAEALSEKKSTNARRPVS</sequence>
<gene>
    <name evidence="4" type="primary">FIP2</name>
    <name evidence="6" type="ordered locus">At4g17060</name>
    <name evidence="7" type="ORF">dl4560c</name>
</gene>
<keyword id="KW-0597">Phosphoprotein</keyword>
<keyword id="KW-1185">Reference proteome</keyword>
<organism>
    <name type="scientific">Arabidopsis thaliana</name>
    <name type="common">Mouse-ear cress</name>
    <dbReference type="NCBI Taxonomy" id="3702"/>
    <lineage>
        <taxon>Eukaryota</taxon>
        <taxon>Viridiplantae</taxon>
        <taxon>Streptophyta</taxon>
        <taxon>Embryophyta</taxon>
        <taxon>Tracheophyta</taxon>
        <taxon>Spermatophyta</taxon>
        <taxon>Magnoliopsida</taxon>
        <taxon>eudicotyledons</taxon>
        <taxon>Gunneridae</taxon>
        <taxon>Pentapetalae</taxon>
        <taxon>rosids</taxon>
        <taxon>malvids</taxon>
        <taxon>Brassicales</taxon>
        <taxon>Brassicaceae</taxon>
        <taxon>Camelineae</taxon>
        <taxon>Arabidopsis</taxon>
    </lineage>
</organism>
<name>FRIP2_ARATH</name>
<dbReference type="EMBL" id="Z97342">
    <property type="protein sequence ID" value="CAB10486.1"/>
    <property type="molecule type" value="Genomic_DNA"/>
</dbReference>
<dbReference type="EMBL" id="AL161545">
    <property type="protein sequence ID" value="CAB80977.1"/>
    <property type="molecule type" value="Genomic_DNA"/>
</dbReference>
<dbReference type="EMBL" id="CP002687">
    <property type="protein sequence ID" value="AEE83844.1"/>
    <property type="molecule type" value="Genomic_DNA"/>
</dbReference>
<dbReference type="EMBL" id="BT033104">
    <property type="protein sequence ID" value="ACF16166.1"/>
    <property type="molecule type" value="mRNA"/>
</dbReference>
<dbReference type="PIR" id="A71439">
    <property type="entry name" value="A71439"/>
</dbReference>
<dbReference type="RefSeq" id="NP_193439.1">
    <property type="nucleotide sequence ID" value="NM_117810.7"/>
</dbReference>
<dbReference type="SMR" id="O23550"/>
<dbReference type="FunCoup" id="O23550">
    <property type="interactions" value="66"/>
</dbReference>
<dbReference type="STRING" id="3702.O23550"/>
<dbReference type="GlyGen" id="O23550">
    <property type="glycosylation" value="1 site"/>
</dbReference>
<dbReference type="iPTMnet" id="O23550"/>
<dbReference type="PaxDb" id="3702-AT4G17060.1"/>
<dbReference type="ProteomicsDB" id="228947"/>
<dbReference type="EnsemblPlants" id="AT4G17060.1">
    <property type="protein sequence ID" value="AT4G17060.1"/>
    <property type="gene ID" value="AT4G17060"/>
</dbReference>
<dbReference type="GeneID" id="827414"/>
<dbReference type="Gramene" id="AT4G17060.1">
    <property type="protein sequence ID" value="AT4G17060.1"/>
    <property type="gene ID" value="AT4G17060"/>
</dbReference>
<dbReference type="KEGG" id="ath:AT4G17060"/>
<dbReference type="Araport" id="AT4G17060"/>
<dbReference type="TAIR" id="AT4G17060">
    <property type="gene designation" value="FIP2"/>
</dbReference>
<dbReference type="eggNOG" id="KOG4282">
    <property type="taxonomic scope" value="Eukaryota"/>
</dbReference>
<dbReference type="HOGENOM" id="CLU_055205_0_0_1"/>
<dbReference type="InParanoid" id="O23550"/>
<dbReference type="OMA" id="RKYNGNP"/>
<dbReference type="PhylomeDB" id="O23550"/>
<dbReference type="PRO" id="PR:O23550"/>
<dbReference type="Proteomes" id="UP000006548">
    <property type="component" value="Chromosome 4"/>
</dbReference>
<dbReference type="ExpressionAtlas" id="O23550">
    <property type="expression patterns" value="baseline and differential"/>
</dbReference>
<dbReference type="GO" id="GO:0000325">
    <property type="term" value="C:plant-type vacuole"/>
    <property type="evidence" value="ECO:0007005"/>
    <property type="project" value="TAIR"/>
</dbReference>
<dbReference type="InterPro" id="IPR044823">
    <property type="entry name" value="ASIL1/2-like"/>
</dbReference>
<dbReference type="PANTHER" id="PTHR31307">
    <property type="entry name" value="TRIHELIX TRANSCRIPTION FACTOR ASIL2"/>
    <property type="match status" value="1"/>
</dbReference>
<dbReference type="PANTHER" id="PTHR31307:SF43">
    <property type="entry name" value="TRIHELIX TRANSCRIPTION FACTOR ASIL2-LIKE"/>
    <property type="match status" value="1"/>
</dbReference>
<protein>
    <recommendedName>
        <fullName evidence="5">Protein FIP2</fullName>
    </recommendedName>
    <alternativeName>
        <fullName evidence="4">FRIGIDA-interacting protein 2</fullName>
    </alternativeName>
</protein>